<feature type="chain" id="PRO_0000190735" description="UPF0758 protein gbs1168">
    <location>
        <begin position="1"/>
        <end position="226"/>
    </location>
</feature>
<feature type="domain" description="MPN" evidence="1">
    <location>
        <begin position="103"/>
        <end position="225"/>
    </location>
</feature>
<feature type="short sequence motif" description="JAMM motif" evidence="1">
    <location>
        <begin position="174"/>
        <end position="187"/>
    </location>
</feature>
<feature type="binding site" evidence="1">
    <location>
        <position position="174"/>
    </location>
    <ligand>
        <name>Zn(2+)</name>
        <dbReference type="ChEBI" id="CHEBI:29105"/>
        <note>catalytic</note>
    </ligand>
</feature>
<feature type="binding site" evidence="1">
    <location>
        <position position="176"/>
    </location>
    <ligand>
        <name>Zn(2+)</name>
        <dbReference type="ChEBI" id="CHEBI:29105"/>
        <note>catalytic</note>
    </ligand>
</feature>
<feature type="binding site" evidence="1">
    <location>
        <position position="187"/>
    </location>
    <ligand>
        <name>Zn(2+)</name>
        <dbReference type="ChEBI" id="CHEBI:29105"/>
        <note>catalytic</note>
    </ligand>
</feature>
<name>Y1168_STRA3</name>
<dbReference type="EMBL" id="AL766849">
    <property type="protein sequence ID" value="CAD46827.1"/>
    <property type="molecule type" value="Genomic_DNA"/>
</dbReference>
<dbReference type="SMR" id="Q8E564"/>
<dbReference type="KEGG" id="san:gbs1168"/>
<dbReference type="eggNOG" id="COG2003">
    <property type="taxonomic scope" value="Bacteria"/>
</dbReference>
<dbReference type="HOGENOM" id="CLU_073529_0_2_9"/>
<dbReference type="Proteomes" id="UP000000823">
    <property type="component" value="Chromosome"/>
</dbReference>
<dbReference type="GO" id="GO:0046872">
    <property type="term" value="F:metal ion binding"/>
    <property type="evidence" value="ECO:0007669"/>
    <property type="project" value="UniProtKB-KW"/>
</dbReference>
<dbReference type="GO" id="GO:0008237">
    <property type="term" value="F:metallopeptidase activity"/>
    <property type="evidence" value="ECO:0007669"/>
    <property type="project" value="UniProtKB-KW"/>
</dbReference>
<dbReference type="GO" id="GO:0006508">
    <property type="term" value="P:proteolysis"/>
    <property type="evidence" value="ECO:0007669"/>
    <property type="project" value="UniProtKB-KW"/>
</dbReference>
<dbReference type="CDD" id="cd08071">
    <property type="entry name" value="MPN_DUF2466"/>
    <property type="match status" value="1"/>
</dbReference>
<dbReference type="Gene3D" id="3.40.140.10">
    <property type="entry name" value="Cytidine Deaminase, domain 2"/>
    <property type="match status" value="1"/>
</dbReference>
<dbReference type="InterPro" id="IPR037518">
    <property type="entry name" value="MPN"/>
</dbReference>
<dbReference type="InterPro" id="IPR025657">
    <property type="entry name" value="RadC_JAB"/>
</dbReference>
<dbReference type="InterPro" id="IPR001405">
    <property type="entry name" value="UPF0758"/>
</dbReference>
<dbReference type="InterPro" id="IPR020891">
    <property type="entry name" value="UPF0758_CS"/>
</dbReference>
<dbReference type="InterPro" id="IPR046778">
    <property type="entry name" value="UPF0758_N"/>
</dbReference>
<dbReference type="NCBIfam" id="NF000642">
    <property type="entry name" value="PRK00024.1"/>
    <property type="match status" value="1"/>
</dbReference>
<dbReference type="NCBIfam" id="TIGR00608">
    <property type="entry name" value="radc"/>
    <property type="match status" value="1"/>
</dbReference>
<dbReference type="PANTHER" id="PTHR30471">
    <property type="entry name" value="DNA REPAIR PROTEIN RADC"/>
    <property type="match status" value="1"/>
</dbReference>
<dbReference type="PANTHER" id="PTHR30471:SF3">
    <property type="entry name" value="UPF0758 PROTEIN YEES-RELATED"/>
    <property type="match status" value="1"/>
</dbReference>
<dbReference type="Pfam" id="PF04002">
    <property type="entry name" value="RadC"/>
    <property type="match status" value="1"/>
</dbReference>
<dbReference type="Pfam" id="PF20582">
    <property type="entry name" value="UPF0758_N"/>
    <property type="match status" value="1"/>
</dbReference>
<dbReference type="SUPFAM" id="SSF102712">
    <property type="entry name" value="JAB1/MPN domain"/>
    <property type="match status" value="1"/>
</dbReference>
<dbReference type="PROSITE" id="PS50249">
    <property type="entry name" value="MPN"/>
    <property type="match status" value="1"/>
</dbReference>
<dbReference type="PROSITE" id="PS01302">
    <property type="entry name" value="UPF0758"/>
    <property type="match status" value="1"/>
</dbReference>
<sequence>MYHIELKKEALLPRERLVDLGADRLSNQELLAILLRTGIKEKPVLEISTQILENISSLADFGQLSLQELQSIKGIGQVKSVEIKAMLELAKRIHKAEYDRKEQILSSEQLARKMMLELGDKKQEHLVAIYMDTQNRIIEQRTIFIGTVRRSVAEPREILHYACKNMATSLIIIHNHPSGSPNPSESDLSFTKKIKRSCDHLGIVCLDHIIVGKNKYYSFREEADIL</sequence>
<gene>
    <name type="ordered locus">gbs1168</name>
</gene>
<accession>Q8E564</accession>
<evidence type="ECO:0000255" key="1">
    <source>
        <dbReference type="PROSITE-ProRule" id="PRU01182"/>
    </source>
</evidence>
<evidence type="ECO:0000305" key="2"/>
<organism>
    <name type="scientific">Streptococcus agalactiae serotype III (strain NEM316)</name>
    <dbReference type="NCBI Taxonomy" id="211110"/>
    <lineage>
        <taxon>Bacteria</taxon>
        <taxon>Bacillati</taxon>
        <taxon>Bacillota</taxon>
        <taxon>Bacilli</taxon>
        <taxon>Lactobacillales</taxon>
        <taxon>Streptococcaceae</taxon>
        <taxon>Streptococcus</taxon>
    </lineage>
</organism>
<comment type="similarity">
    <text evidence="2">Belongs to the UPF0758 family.</text>
</comment>
<protein>
    <recommendedName>
        <fullName>UPF0758 protein gbs1168</fullName>
    </recommendedName>
</protein>
<reference key="1">
    <citation type="journal article" date="2002" name="Mol. Microbiol.">
        <title>Genome sequence of Streptococcus agalactiae, a pathogen causing invasive neonatal disease.</title>
        <authorList>
            <person name="Glaser P."/>
            <person name="Rusniok C."/>
            <person name="Buchrieser C."/>
            <person name="Chevalier F."/>
            <person name="Frangeul L."/>
            <person name="Msadek T."/>
            <person name="Zouine M."/>
            <person name="Couve E."/>
            <person name="Lalioui L."/>
            <person name="Poyart C."/>
            <person name="Trieu-Cuot P."/>
            <person name="Kunst F."/>
        </authorList>
    </citation>
    <scope>NUCLEOTIDE SEQUENCE [LARGE SCALE GENOMIC DNA]</scope>
    <source>
        <strain>NEM316</strain>
    </source>
</reference>
<keyword id="KW-0378">Hydrolase</keyword>
<keyword id="KW-0479">Metal-binding</keyword>
<keyword id="KW-0482">Metalloprotease</keyword>
<keyword id="KW-0645">Protease</keyword>
<keyword id="KW-0862">Zinc</keyword>
<proteinExistence type="inferred from homology"/>